<keyword id="KW-0175">Coiled coil</keyword>
<keyword id="KW-0507">mRNA processing</keyword>
<keyword id="KW-0508">mRNA splicing</keyword>
<keyword id="KW-0539">Nucleus</keyword>
<keyword id="KW-1185">Reference proteome</keyword>
<keyword id="KW-0747">Spliceosome</keyword>
<evidence type="ECO:0000250" key="1"/>
<evidence type="ECO:0000255" key="2"/>
<evidence type="ECO:0000256" key="3">
    <source>
        <dbReference type="SAM" id="MobiDB-lite"/>
    </source>
</evidence>
<evidence type="ECO:0000305" key="4"/>
<accession>Q6FP02</accession>
<proteinExistence type="inferred from homology"/>
<gene>
    <name type="primary">CWC25</name>
    <name type="ordered locus">CAGL0J07700g</name>
</gene>
<sequence>MGTGDLNLLKSWNPKLVKNRKKVWEKEQRLLEEDEKIRKRQLEIAKEKEEEELLAGRDSTKGRKTGLEWMYQDDPTAKEDYLLGKKKLDTTVIKKAEVMEENQTPLTKINKTTVIPDAIYSKEDPMARFGTKVKRNKVVKKEPVKPLRGKTTNEPRTDNIKPKSDYKKRLQEELDY</sequence>
<name>CWC25_CANGA</name>
<protein>
    <recommendedName>
        <fullName>Pre-mRNA-splicing factor CWC25</fullName>
    </recommendedName>
</protein>
<dbReference type="EMBL" id="CR380956">
    <property type="protein sequence ID" value="CAG60993.1"/>
    <property type="molecule type" value="Genomic_DNA"/>
</dbReference>
<dbReference type="RefSeq" id="XP_448042.1">
    <property type="nucleotide sequence ID" value="XM_448042.1"/>
</dbReference>
<dbReference type="SMR" id="Q6FP02"/>
<dbReference type="FunCoup" id="Q6FP02">
    <property type="interactions" value="75"/>
</dbReference>
<dbReference type="STRING" id="284593.Q6FP02"/>
<dbReference type="EnsemblFungi" id="CAGL0J07700g-T">
    <property type="protein sequence ID" value="CAGL0J07700g-T-p1"/>
    <property type="gene ID" value="CAGL0J07700g"/>
</dbReference>
<dbReference type="KEGG" id="cgr:2889902"/>
<dbReference type="CGD" id="CAL0133598">
    <property type="gene designation" value="CAGL0J07700g"/>
</dbReference>
<dbReference type="VEuPathDB" id="FungiDB:B1J91_J07700g"/>
<dbReference type="VEuPathDB" id="FungiDB:CAGL0J07700g"/>
<dbReference type="eggNOG" id="KOG3869">
    <property type="taxonomic scope" value="Eukaryota"/>
</dbReference>
<dbReference type="HOGENOM" id="CLU_025093_3_1_1"/>
<dbReference type="InParanoid" id="Q6FP02"/>
<dbReference type="Proteomes" id="UP000002428">
    <property type="component" value="Chromosome J"/>
</dbReference>
<dbReference type="GO" id="GO:0000974">
    <property type="term" value="C:Prp19 complex"/>
    <property type="evidence" value="ECO:0007669"/>
    <property type="project" value="EnsemblFungi"/>
</dbReference>
<dbReference type="GO" id="GO:0005684">
    <property type="term" value="C:U2-type spliceosomal complex"/>
    <property type="evidence" value="ECO:0007669"/>
    <property type="project" value="EnsemblFungi"/>
</dbReference>
<dbReference type="GO" id="GO:0000398">
    <property type="term" value="P:mRNA splicing, via spliceosome"/>
    <property type="evidence" value="ECO:0007669"/>
    <property type="project" value="EnsemblFungi"/>
</dbReference>
<dbReference type="InterPro" id="IPR019339">
    <property type="entry name" value="CIR_N_dom"/>
</dbReference>
<dbReference type="InterPro" id="IPR051376">
    <property type="entry name" value="CWC25_splicing_factor"/>
</dbReference>
<dbReference type="PANTHER" id="PTHR16196">
    <property type="entry name" value="CELL CYCLE CONTROL PROTEIN CWF25"/>
    <property type="match status" value="1"/>
</dbReference>
<dbReference type="PANTHER" id="PTHR16196:SF0">
    <property type="entry name" value="PRE-MRNA-SPLICING FACTOR CWC25 HOMOLOG"/>
    <property type="match status" value="1"/>
</dbReference>
<dbReference type="Pfam" id="PF10197">
    <property type="entry name" value="Cir_N"/>
    <property type="match status" value="1"/>
</dbReference>
<dbReference type="SMART" id="SM01083">
    <property type="entry name" value="Cir_N"/>
    <property type="match status" value="1"/>
</dbReference>
<organism>
    <name type="scientific">Candida glabrata (strain ATCC 2001 / BCRC 20586 / JCM 3761 / NBRC 0622 / NRRL Y-65 / CBS 138)</name>
    <name type="common">Yeast</name>
    <name type="synonym">Nakaseomyces glabratus</name>
    <dbReference type="NCBI Taxonomy" id="284593"/>
    <lineage>
        <taxon>Eukaryota</taxon>
        <taxon>Fungi</taxon>
        <taxon>Dikarya</taxon>
        <taxon>Ascomycota</taxon>
        <taxon>Saccharomycotina</taxon>
        <taxon>Saccharomycetes</taxon>
        <taxon>Saccharomycetales</taxon>
        <taxon>Saccharomycetaceae</taxon>
        <taxon>Nakaseomyces</taxon>
    </lineage>
</organism>
<comment type="function">
    <text evidence="1">Involved in pre-mRNA splicing.</text>
</comment>
<comment type="subunit">
    <text evidence="1">Associated with the spliceosome.</text>
</comment>
<comment type="subcellular location">
    <subcellularLocation>
        <location evidence="1">Nucleus</location>
    </subcellularLocation>
</comment>
<comment type="similarity">
    <text evidence="4">Belongs to the CWC25 family.</text>
</comment>
<reference key="1">
    <citation type="journal article" date="2004" name="Nature">
        <title>Genome evolution in yeasts.</title>
        <authorList>
            <person name="Dujon B."/>
            <person name="Sherman D."/>
            <person name="Fischer G."/>
            <person name="Durrens P."/>
            <person name="Casaregola S."/>
            <person name="Lafontaine I."/>
            <person name="de Montigny J."/>
            <person name="Marck C."/>
            <person name="Neuveglise C."/>
            <person name="Talla E."/>
            <person name="Goffard N."/>
            <person name="Frangeul L."/>
            <person name="Aigle M."/>
            <person name="Anthouard V."/>
            <person name="Babour A."/>
            <person name="Barbe V."/>
            <person name="Barnay S."/>
            <person name="Blanchin S."/>
            <person name="Beckerich J.-M."/>
            <person name="Beyne E."/>
            <person name="Bleykasten C."/>
            <person name="Boisrame A."/>
            <person name="Boyer J."/>
            <person name="Cattolico L."/>
            <person name="Confanioleri F."/>
            <person name="de Daruvar A."/>
            <person name="Despons L."/>
            <person name="Fabre E."/>
            <person name="Fairhead C."/>
            <person name="Ferry-Dumazet H."/>
            <person name="Groppi A."/>
            <person name="Hantraye F."/>
            <person name="Hennequin C."/>
            <person name="Jauniaux N."/>
            <person name="Joyet P."/>
            <person name="Kachouri R."/>
            <person name="Kerrest A."/>
            <person name="Koszul R."/>
            <person name="Lemaire M."/>
            <person name="Lesur I."/>
            <person name="Ma L."/>
            <person name="Muller H."/>
            <person name="Nicaud J.-M."/>
            <person name="Nikolski M."/>
            <person name="Oztas S."/>
            <person name="Ozier-Kalogeropoulos O."/>
            <person name="Pellenz S."/>
            <person name="Potier S."/>
            <person name="Richard G.-F."/>
            <person name="Straub M.-L."/>
            <person name="Suleau A."/>
            <person name="Swennen D."/>
            <person name="Tekaia F."/>
            <person name="Wesolowski-Louvel M."/>
            <person name="Westhof E."/>
            <person name="Wirth B."/>
            <person name="Zeniou-Meyer M."/>
            <person name="Zivanovic Y."/>
            <person name="Bolotin-Fukuhara M."/>
            <person name="Thierry A."/>
            <person name="Bouchier C."/>
            <person name="Caudron B."/>
            <person name="Scarpelli C."/>
            <person name="Gaillardin C."/>
            <person name="Weissenbach J."/>
            <person name="Wincker P."/>
            <person name="Souciet J.-L."/>
        </authorList>
    </citation>
    <scope>NUCLEOTIDE SEQUENCE [LARGE SCALE GENOMIC DNA]</scope>
    <source>
        <strain>ATCC 2001 / BCRC 20586 / JCM 3761 / NBRC 0622 / NRRL Y-65 / CBS 138</strain>
    </source>
</reference>
<feature type="chain" id="PRO_0000079586" description="Pre-mRNA-splicing factor CWC25">
    <location>
        <begin position="1"/>
        <end position="176"/>
    </location>
</feature>
<feature type="region of interest" description="Disordered" evidence="3">
    <location>
        <begin position="139"/>
        <end position="176"/>
    </location>
</feature>
<feature type="coiled-coil region" evidence="2">
    <location>
        <begin position="25"/>
        <end position="58"/>
    </location>
</feature>